<comment type="function">
    <text evidence="1">Catalyzes the reduction of 2,3-diketo-L-gulonate in the presence of NADH, to form 3-keto-L-gulonate.</text>
</comment>
<comment type="catalytic activity">
    <reaction evidence="1">
        <text>3-dehydro-L-gulonate + NAD(+) = 2,3-dioxo-L-gulonate + NADH + H(+)</text>
        <dbReference type="Rhea" id="RHEA:21924"/>
        <dbReference type="ChEBI" id="CHEBI:15378"/>
        <dbReference type="ChEBI" id="CHEBI:57441"/>
        <dbReference type="ChEBI" id="CHEBI:57540"/>
        <dbReference type="ChEBI" id="CHEBI:57655"/>
        <dbReference type="ChEBI" id="CHEBI:57945"/>
        <dbReference type="EC" id="1.1.1.130"/>
    </reaction>
</comment>
<comment type="catalytic activity">
    <reaction evidence="1">
        <text>3-dehydro-L-gulonate + NADP(+) = 2,3-dioxo-L-gulonate + NADPH + H(+)</text>
        <dbReference type="Rhea" id="RHEA:21928"/>
        <dbReference type="ChEBI" id="CHEBI:15378"/>
        <dbReference type="ChEBI" id="CHEBI:57441"/>
        <dbReference type="ChEBI" id="CHEBI:57655"/>
        <dbReference type="ChEBI" id="CHEBI:57783"/>
        <dbReference type="ChEBI" id="CHEBI:58349"/>
        <dbReference type="EC" id="1.1.1.130"/>
    </reaction>
</comment>
<comment type="subunit">
    <text evidence="1">Homodimer.</text>
</comment>
<comment type="subcellular location">
    <subcellularLocation>
        <location evidence="1">Cytoplasm</location>
    </subcellularLocation>
</comment>
<comment type="similarity">
    <text evidence="1">Belongs to the LDH2/MDH2 oxidoreductase family. DlgD subfamily.</text>
</comment>
<evidence type="ECO:0000255" key="1">
    <source>
        <dbReference type="HAMAP-Rule" id="MF_00820"/>
    </source>
</evidence>
<reference key="1">
    <citation type="journal article" date="2009" name="PLoS Genet.">
        <title>Organised genome dynamics in the Escherichia coli species results in highly diverse adaptive paths.</title>
        <authorList>
            <person name="Touchon M."/>
            <person name="Hoede C."/>
            <person name="Tenaillon O."/>
            <person name="Barbe V."/>
            <person name="Baeriswyl S."/>
            <person name="Bidet P."/>
            <person name="Bingen E."/>
            <person name="Bonacorsi S."/>
            <person name="Bouchier C."/>
            <person name="Bouvet O."/>
            <person name="Calteau A."/>
            <person name="Chiapello H."/>
            <person name="Clermont O."/>
            <person name="Cruveiller S."/>
            <person name="Danchin A."/>
            <person name="Diard M."/>
            <person name="Dossat C."/>
            <person name="Karoui M.E."/>
            <person name="Frapy E."/>
            <person name="Garry L."/>
            <person name="Ghigo J.M."/>
            <person name="Gilles A.M."/>
            <person name="Johnson J."/>
            <person name="Le Bouguenec C."/>
            <person name="Lescat M."/>
            <person name="Mangenot S."/>
            <person name="Martinez-Jehanne V."/>
            <person name="Matic I."/>
            <person name="Nassif X."/>
            <person name="Oztas S."/>
            <person name="Petit M.A."/>
            <person name="Pichon C."/>
            <person name="Rouy Z."/>
            <person name="Ruf C.S."/>
            <person name="Schneider D."/>
            <person name="Tourret J."/>
            <person name="Vacherie B."/>
            <person name="Vallenet D."/>
            <person name="Medigue C."/>
            <person name="Rocha E.P.C."/>
            <person name="Denamur E."/>
        </authorList>
    </citation>
    <scope>NUCLEOTIDE SEQUENCE [LARGE SCALE GENOMIC DNA]</scope>
    <source>
        <strain>UMN026 / ExPEC</strain>
    </source>
</reference>
<keyword id="KW-0963">Cytoplasm</keyword>
<keyword id="KW-0520">NAD</keyword>
<keyword id="KW-0560">Oxidoreductase</keyword>
<dbReference type="EC" id="1.1.1.130" evidence="1"/>
<dbReference type="EMBL" id="CU928163">
    <property type="protein sequence ID" value="CAR15229.1"/>
    <property type="molecule type" value="Genomic_DNA"/>
</dbReference>
<dbReference type="RefSeq" id="YP_002414729.1">
    <property type="nucleotide sequence ID" value="NC_011751.1"/>
</dbReference>
<dbReference type="SMR" id="B7NEM8"/>
<dbReference type="STRING" id="585056.ECUMN_4088"/>
<dbReference type="KEGG" id="eum:ECUMN_4088"/>
<dbReference type="PATRIC" id="fig|585056.7.peg.4262"/>
<dbReference type="HOGENOM" id="CLU_040452_4_0_6"/>
<dbReference type="Proteomes" id="UP000007097">
    <property type="component" value="Chromosome"/>
</dbReference>
<dbReference type="GO" id="GO:0005737">
    <property type="term" value="C:cytoplasm"/>
    <property type="evidence" value="ECO:0007669"/>
    <property type="project" value="UniProtKB-SubCell"/>
</dbReference>
<dbReference type="GO" id="GO:0047559">
    <property type="term" value="F:3-dehydro-L-gulonate 2-dehydrogenase activity"/>
    <property type="evidence" value="ECO:0007669"/>
    <property type="project" value="UniProtKB-UniRule"/>
</dbReference>
<dbReference type="GO" id="GO:0070403">
    <property type="term" value="F:NAD+ binding"/>
    <property type="evidence" value="ECO:0007669"/>
    <property type="project" value="InterPro"/>
</dbReference>
<dbReference type="Gene3D" id="1.10.1530.10">
    <property type="match status" value="1"/>
</dbReference>
<dbReference type="Gene3D" id="3.30.1370.60">
    <property type="entry name" value="Hypothetical oxidoreductase yiak, domain 2"/>
    <property type="match status" value="1"/>
</dbReference>
<dbReference type="Gene3D" id="3.30.60.50">
    <property type="entry name" value="Hypothetical oxidoreductase yiak, domain 3"/>
    <property type="match status" value="1"/>
</dbReference>
<dbReference type="HAMAP" id="MF_00820">
    <property type="entry name" value="Diketo_gul_reduc"/>
    <property type="match status" value="1"/>
</dbReference>
<dbReference type="InterPro" id="IPR023689">
    <property type="entry name" value="Diketo_gul_Rdtase"/>
</dbReference>
<dbReference type="InterPro" id="IPR043144">
    <property type="entry name" value="Mal/L-sulf/L-lact_DH-like_ah"/>
</dbReference>
<dbReference type="InterPro" id="IPR043143">
    <property type="entry name" value="Mal/L-sulf/L-lact_DH-like_NADP"/>
</dbReference>
<dbReference type="InterPro" id="IPR036111">
    <property type="entry name" value="Mal/L-sulfo/L-lacto_DH-like_sf"/>
</dbReference>
<dbReference type="InterPro" id="IPR003767">
    <property type="entry name" value="Malate/L-lactate_DH-like"/>
</dbReference>
<dbReference type="NCBIfam" id="NF009750">
    <property type="entry name" value="PRK13260.1"/>
    <property type="match status" value="1"/>
</dbReference>
<dbReference type="PANTHER" id="PTHR11091:SF3">
    <property type="entry name" value="2,3-DIKETO-L-GULONATE REDUCTASE"/>
    <property type="match status" value="1"/>
</dbReference>
<dbReference type="PANTHER" id="PTHR11091">
    <property type="entry name" value="OXIDOREDUCTASE-RELATED"/>
    <property type="match status" value="1"/>
</dbReference>
<dbReference type="Pfam" id="PF02615">
    <property type="entry name" value="Ldh_2"/>
    <property type="match status" value="1"/>
</dbReference>
<dbReference type="SUPFAM" id="SSF89733">
    <property type="entry name" value="L-sulfolactate dehydrogenase-like"/>
    <property type="match status" value="1"/>
</dbReference>
<feature type="chain" id="PRO_1000134341" description="2,3-diketo-L-gulonate reductase">
    <location>
        <begin position="1"/>
        <end position="332"/>
    </location>
</feature>
<feature type="active site" description="Proton donor" evidence="1">
    <location>
        <position position="44"/>
    </location>
</feature>
<feature type="binding site" evidence="1">
    <location>
        <begin position="168"/>
        <end position="174"/>
    </location>
    <ligand>
        <name>NAD(+)</name>
        <dbReference type="ChEBI" id="CHEBI:57540"/>
    </ligand>
</feature>
<feature type="binding site" evidence="1">
    <location>
        <begin position="224"/>
        <end position="225"/>
    </location>
    <ligand>
        <name>NAD(+)</name>
        <dbReference type="ChEBI" id="CHEBI:57540"/>
    </ligand>
</feature>
<feature type="binding site" evidence="1">
    <location>
        <begin position="304"/>
        <end position="306"/>
    </location>
    <ligand>
        <name>NAD(+)</name>
        <dbReference type="ChEBI" id="CHEBI:57540"/>
    </ligand>
</feature>
<sequence>MKVTFEQLKAAFNRVLISRGVDSETADACAEMFARTTESGVYSHGVNRFPRFIQQLDNGDIIPDAEAKRITTLGAIEQWDAQRSIGNLTAKKMMDRAIELAADHGIGLVALRNANHWMRGGSYGWQAAEKGYIGICWTNSIAVMPPWGAKECRIGTNPLIVAIPSTPITMVDMSMSMFSYGMLEVNRLAGRQLPVDGGFDDEGNLTKEPGVIEKNRRILPMGYWKGSGMSIVLDMIATLLSDGASVAEVTQDNSDEYGVSQIFIAIEVDKLIDGATRDAKLQRIMDYITTAERADENQAIRLPGHEFTTLLAENRRNGITVDDSVWAKIQAL</sequence>
<proteinExistence type="inferred from homology"/>
<name>DLGD_ECOLU</name>
<accession>B7NEM8</accession>
<gene>
    <name evidence="1" type="primary">dlgD</name>
    <name type="ordered locus">ECUMN_4088</name>
</gene>
<protein>
    <recommendedName>
        <fullName evidence="1">2,3-diketo-L-gulonate reductase</fullName>
        <shortName evidence="1">2,3-DKG reductase</shortName>
        <ecNumber evidence="1">1.1.1.130</ecNumber>
    </recommendedName>
    <alternativeName>
        <fullName evidence="1">3-dehydro-L-gulonate 2-dehydrogenase</fullName>
    </alternativeName>
</protein>
<organism>
    <name type="scientific">Escherichia coli O17:K52:H18 (strain UMN026 / ExPEC)</name>
    <dbReference type="NCBI Taxonomy" id="585056"/>
    <lineage>
        <taxon>Bacteria</taxon>
        <taxon>Pseudomonadati</taxon>
        <taxon>Pseudomonadota</taxon>
        <taxon>Gammaproteobacteria</taxon>
        <taxon>Enterobacterales</taxon>
        <taxon>Enterobacteriaceae</taxon>
        <taxon>Escherichia</taxon>
    </lineage>
</organism>